<comment type="function">
    <text>May play a role in signal transduction of hyperosmotic response.</text>
</comment>
<comment type="catalytic activity">
    <reaction>
        <text>L-seryl-[protein] + ATP = O-phospho-L-seryl-[protein] + ADP + H(+)</text>
        <dbReference type="Rhea" id="RHEA:17989"/>
        <dbReference type="Rhea" id="RHEA-COMP:9863"/>
        <dbReference type="Rhea" id="RHEA-COMP:11604"/>
        <dbReference type="ChEBI" id="CHEBI:15378"/>
        <dbReference type="ChEBI" id="CHEBI:29999"/>
        <dbReference type="ChEBI" id="CHEBI:30616"/>
        <dbReference type="ChEBI" id="CHEBI:83421"/>
        <dbReference type="ChEBI" id="CHEBI:456216"/>
        <dbReference type="EC" id="2.7.11.1"/>
    </reaction>
</comment>
<comment type="catalytic activity">
    <reaction>
        <text>L-threonyl-[protein] + ATP = O-phospho-L-threonyl-[protein] + ADP + H(+)</text>
        <dbReference type="Rhea" id="RHEA:46608"/>
        <dbReference type="Rhea" id="RHEA-COMP:11060"/>
        <dbReference type="Rhea" id="RHEA-COMP:11605"/>
        <dbReference type="ChEBI" id="CHEBI:15378"/>
        <dbReference type="ChEBI" id="CHEBI:30013"/>
        <dbReference type="ChEBI" id="CHEBI:30616"/>
        <dbReference type="ChEBI" id="CHEBI:61977"/>
        <dbReference type="ChEBI" id="CHEBI:456216"/>
        <dbReference type="EC" id="2.7.11.1"/>
    </reaction>
</comment>
<comment type="activity regulation">
    <text>Activated by hyperosmotic stress.</text>
</comment>
<comment type="subcellular location">
    <subcellularLocation>
        <location evidence="6">Cytoplasm</location>
    </subcellularLocation>
    <subcellularLocation>
        <location evidence="6">Nucleus</location>
    </subcellularLocation>
</comment>
<comment type="tissue specificity">
    <text evidence="5">Weakly expressed in roots. Expressed in roots of young seedlings.</text>
</comment>
<comment type="induction">
    <text evidence="5 6">By hyperosmotic stress in roots. Weakly induced by hyperosmotic stress and abscisic acid (ABA) in leaf blades (PubMed:15084714). Accumulates upon incompatible interaction with Xanthomonas oryzae pv. oryzicola (Ref.2).</text>
</comment>
<comment type="PTM">
    <text evidence="1">May be phosphorylated.</text>
</comment>
<comment type="similarity">
    <text evidence="2">Belongs to the protein kinase superfamily. Ser/Thr protein kinase family.</text>
</comment>
<comment type="sequence caution" evidence="8">
    <conflict type="erroneous gene model prediction">
        <sequence resource="EMBL-CDS" id="CAE03037"/>
    </conflict>
</comment>
<keyword id="KW-0938">Abscisic acid signaling pathway</keyword>
<keyword id="KW-0067">ATP-binding</keyword>
<keyword id="KW-0963">Cytoplasm</keyword>
<keyword id="KW-0418">Kinase</keyword>
<keyword id="KW-0547">Nucleotide-binding</keyword>
<keyword id="KW-0539">Nucleus</keyword>
<keyword id="KW-0597">Phosphoprotein</keyword>
<keyword id="KW-1185">Reference proteome</keyword>
<keyword id="KW-0723">Serine/threonine-protein kinase</keyword>
<keyword id="KW-0346">Stress response</keyword>
<keyword id="KW-0808">Transferase</keyword>
<sequence length="359" mass="41325">MERYELLKDIGAGNFGVARLMRNKETKELVAMKYIPRGLKIDENVAREIINHRSLRHPNIIRFKEVVVTPTHLAIVMEYAAGGELFDRICNAGRFSEDEARYFFQQLICGVSYCHFMQICHRDLKLENTLLDGSPAPRLKICDFGYSKSSLLHSKPKSTVGTPAYIAPEVLSRREYDGKTADVWSCGVTLYVMLVGAYPFEDPDDPKNFRKTIGRIMSIQYKIPEYVHVSQDCRQLLSRIFVANPAKRITIREIRNHPWFLKNLPRELTEAAQAMYYKKDNSAPTYSVQSVEEIMKIVEEARTPPRSSTPVAGFGWQEEDEQEDNSKKPEEEQEEEEDAEDEYDKQVKQVHASGEFQLS</sequence>
<reference key="1">
    <citation type="journal article" date="2004" name="Plant Cell">
        <title>Differential activation of the rice sucrose nonfermenting1-related protein kinase2 family by hyperosmotic stress and abscisic acid.</title>
        <authorList>
            <person name="Kobayashi Y."/>
            <person name="Yamamoto S."/>
            <person name="Minami H."/>
            <person name="Kagaya Y."/>
            <person name="Hattori T."/>
        </authorList>
    </citation>
    <scope>NUCLEOTIDE SEQUENCE [MRNA]</scope>
    <scope>TISSUE SPECIFICITY</scope>
    <scope>INDUCTION</scope>
    <scope>NOMENCLATURE</scope>
    <source>
        <strain>cv. Nipponbare</strain>
    </source>
</reference>
<reference key="2">
    <citation type="journal article" date="2013" name="Plant Mol. Biol. Rep.">
        <title>Genome-wide phylogenetic analysis of stress-activated protein kinase genes in rice (OsSAPKs) and expression profiling in response to Xanthomonas oryzae pv. oryzicola infection.</title>
        <authorList>
            <person name="Xu M.-R."/>
            <person name="Huang L.-Y."/>
            <person name="Zhang F."/>
            <person name="Zhu L.-H."/>
            <person name="Zhou Y.-L."/>
            <person name="Li Z.-K."/>
        </authorList>
    </citation>
    <scope>NUCLEOTIDE SEQUENCE [MRNA]</scope>
    <scope>INDUCTION BY XANTHOMONAS ORYZAE</scope>
    <scope>SUBCELLULAR LOCATION</scope>
</reference>
<reference key="3">
    <citation type="submission" date="2011-10" db="EMBL/GenBank/DDBJ databases">
        <title>OSRK4 mRNA.</title>
        <authorList>
            <person name="Yoon I.S."/>
        </authorList>
    </citation>
    <scope>NUCLEOTIDE SEQUENCE [MRNA]</scope>
</reference>
<reference key="4">
    <citation type="journal article" date="2002" name="Nature">
        <title>Sequence and analysis of rice chromosome 4.</title>
        <authorList>
            <person name="Feng Q."/>
            <person name="Zhang Y."/>
            <person name="Hao P."/>
            <person name="Wang S."/>
            <person name="Fu G."/>
            <person name="Huang Y."/>
            <person name="Li Y."/>
            <person name="Zhu J."/>
            <person name="Liu Y."/>
            <person name="Hu X."/>
            <person name="Jia P."/>
            <person name="Zhang Y."/>
            <person name="Zhao Q."/>
            <person name="Ying K."/>
            <person name="Yu S."/>
            <person name="Tang Y."/>
            <person name="Weng Q."/>
            <person name="Zhang L."/>
            <person name="Lu Y."/>
            <person name="Mu J."/>
            <person name="Lu Y."/>
            <person name="Zhang L.S."/>
            <person name="Yu Z."/>
            <person name="Fan D."/>
            <person name="Liu X."/>
            <person name="Lu T."/>
            <person name="Li C."/>
            <person name="Wu Y."/>
            <person name="Sun T."/>
            <person name="Lei H."/>
            <person name="Li T."/>
            <person name="Hu H."/>
            <person name="Guan J."/>
            <person name="Wu M."/>
            <person name="Zhang R."/>
            <person name="Zhou B."/>
            <person name="Chen Z."/>
            <person name="Chen L."/>
            <person name="Jin Z."/>
            <person name="Wang R."/>
            <person name="Yin H."/>
            <person name="Cai Z."/>
            <person name="Ren S."/>
            <person name="Lv G."/>
            <person name="Gu W."/>
            <person name="Zhu G."/>
            <person name="Tu Y."/>
            <person name="Jia J."/>
            <person name="Zhang Y."/>
            <person name="Chen J."/>
            <person name="Kang H."/>
            <person name="Chen X."/>
            <person name="Shao C."/>
            <person name="Sun Y."/>
            <person name="Hu Q."/>
            <person name="Zhang X."/>
            <person name="Zhang W."/>
            <person name="Wang L."/>
            <person name="Ding C."/>
            <person name="Sheng H."/>
            <person name="Gu J."/>
            <person name="Chen S."/>
            <person name="Ni L."/>
            <person name="Zhu F."/>
            <person name="Chen W."/>
            <person name="Lan L."/>
            <person name="Lai Y."/>
            <person name="Cheng Z."/>
            <person name="Gu M."/>
            <person name="Jiang J."/>
            <person name="Li J."/>
            <person name="Hong G."/>
            <person name="Xue Y."/>
            <person name="Han B."/>
        </authorList>
    </citation>
    <scope>NUCLEOTIDE SEQUENCE [LARGE SCALE GENOMIC DNA]</scope>
    <source>
        <strain>cv. Nipponbare</strain>
    </source>
</reference>
<reference key="5">
    <citation type="journal article" date="2005" name="Nature">
        <title>The map-based sequence of the rice genome.</title>
        <authorList>
            <consortium name="International rice genome sequencing project (IRGSP)"/>
        </authorList>
    </citation>
    <scope>NUCLEOTIDE SEQUENCE [LARGE SCALE GENOMIC DNA]</scope>
    <source>
        <strain>cv. Nipponbare</strain>
    </source>
</reference>
<reference key="6">
    <citation type="journal article" date="2008" name="Nucleic Acids Res.">
        <title>The rice annotation project database (RAP-DB): 2008 update.</title>
        <authorList>
            <consortium name="The rice annotation project (RAP)"/>
        </authorList>
    </citation>
    <scope>GENOME REANNOTATION</scope>
    <source>
        <strain>cv. Nipponbare</strain>
    </source>
</reference>
<reference key="7">
    <citation type="journal article" date="2013" name="Rice">
        <title>Improvement of the Oryza sativa Nipponbare reference genome using next generation sequence and optical map data.</title>
        <authorList>
            <person name="Kawahara Y."/>
            <person name="de la Bastide M."/>
            <person name="Hamilton J.P."/>
            <person name="Kanamori H."/>
            <person name="McCombie W.R."/>
            <person name="Ouyang S."/>
            <person name="Schwartz D.C."/>
            <person name="Tanaka T."/>
            <person name="Wu J."/>
            <person name="Zhou S."/>
            <person name="Childs K.L."/>
            <person name="Davidson R.M."/>
            <person name="Lin H."/>
            <person name="Quesada-Ocampo L."/>
            <person name="Vaillancourt B."/>
            <person name="Sakai H."/>
            <person name="Lee S.S."/>
            <person name="Kim J."/>
            <person name="Numa H."/>
            <person name="Itoh T."/>
            <person name="Buell C.R."/>
            <person name="Matsumoto T."/>
        </authorList>
    </citation>
    <scope>GENOME REANNOTATION</scope>
    <source>
        <strain>cv. Nipponbare</strain>
    </source>
</reference>
<reference key="8">
    <citation type="journal article" date="2005" name="PLoS Biol.">
        <title>The genomes of Oryza sativa: a history of duplications.</title>
        <authorList>
            <person name="Yu J."/>
            <person name="Wang J."/>
            <person name="Lin W."/>
            <person name="Li S."/>
            <person name="Li H."/>
            <person name="Zhou J."/>
            <person name="Ni P."/>
            <person name="Dong W."/>
            <person name="Hu S."/>
            <person name="Zeng C."/>
            <person name="Zhang J."/>
            <person name="Zhang Y."/>
            <person name="Li R."/>
            <person name="Xu Z."/>
            <person name="Li S."/>
            <person name="Li X."/>
            <person name="Zheng H."/>
            <person name="Cong L."/>
            <person name="Lin L."/>
            <person name="Yin J."/>
            <person name="Geng J."/>
            <person name="Li G."/>
            <person name="Shi J."/>
            <person name="Liu J."/>
            <person name="Lv H."/>
            <person name="Li J."/>
            <person name="Wang J."/>
            <person name="Deng Y."/>
            <person name="Ran L."/>
            <person name="Shi X."/>
            <person name="Wang X."/>
            <person name="Wu Q."/>
            <person name="Li C."/>
            <person name="Ren X."/>
            <person name="Wang J."/>
            <person name="Wang X."/>
            <person name="Li D."/>
            <person name="Liu D."/>
            <person name="Zhang X."/>
            <person name="Ji Z."/>
            <person name="Zhao W."/>
            <person name="Sun Y."/>
            <person name="Zhang Z."/>
            <person name="Bao J."/>
            <person name="Han Y."/>
            <person name="Dong L."/>
            <person name="Ji J."/>
            <person name="Chen P."/>
            <person name="Wu S."/>
            <person name="Liu J."/>
            <person name="Xiao Y."/>
            <person name="Bu D."/>
            <person name="Tan J."/>
            <person name="Yang L."/>
            <person name="Ye C."/>
            <person name="Zhang J."/>
            <person name="Xu J."/>
            <person name="Zhou Y."/>
            <person name="Yu Y."/>
            <person name="Zhang B."/>
            <person name="Zhuang S."/>
            <person name="Wei H."/>
            <person name="Liu B."/>
            <person name="Lei M."/>
            <person name="Yu H."/>
            <person name="Li Y."/>
            <person name="Xu H."/>
            <person name="Wei S."/>
            <person name="He X."/>
            <person name="Fang L."/>
            <person name="Zhang Z."/>
            <person name="Zhang Y."/>
            <person name="Huang X."/>
            <person name="Su Z."/>
            <person name="Tong W."/>
            <person name="Li J."/>
            <person name="Tong Z."/>
            <person name="Li S."/>
            <person name="Ye J."/>
            <person name="Wang L."/>
            <person name="Fang L."/>
            <person name="Lei T."/>
            <person name="Chen C.-S."/>
            <person name="Chen H.-C."/>
            <person name="Xu Z."/>
            <person name="Li H."/>
            <person name="Huang H."/>
            <person name="Zhang F."/>
            <person name="Xu H."/>
            <person name="Li N."/>
            <person name="Zhao C."/>
            <person name="Li S."/>
            <person name="Dong L."/>
            <person name="Huang Y."/>
            <person name="Li L."/>
            <person name="Xi Y."/>
            <person name="Qi Q."/>
            <person name="Li W."/>
            <person name="Zhang B."/>
            <person name="Hu W."/>
            <person name="Zhang Y."/>
            <person name="Tian X."/>
            <person name="Jiao Y."/>
            <person name="Liang X."/>
            <person name="Jin J."/>
            <person name="Gao L."/>
            <person name="Zheng W."/>
            <person name="Hao B."/>
            <person name="Liu S.-M."/>
            <person name="Wang W."/>
            <person name="Yuan L."/>
            <person name="Cao M."/>
            <person name="McDermott J."/>
            <person name="Samudrala R."/>
            <person name="Wang J."/>
            <person name="Wong G.K.-S."/>
            <person name="Yang H."/>
        </authorList>
    </citation>
    <scope>NUCLEOTIDE SEQUENCE [LARGE SCALE GENOMIC DNA]</scope>
    <source>
        <strain>cv. Nipponbare</strain>
    </source>
</reference>
<organism>
    <name type="scientific">Oryza sativa subsp. japonica</name>
    <name type="common">Rice</name>
    <dbReference type="NCBI Taxonomy" id="39947"/>
    <lineage>
        <taxon>Eukaryota</taxon>
        <taxon>Viridiplantae</taxon>
        <taxon>Streptophyta</taxon>
        <taxon>Embryophyta</taxon>
        <taxon>Tracheophyta</taxon>
        <taxon>Spermatophyta</taxon>
        <taxon>Magnoliopsida</taxon>
        <taxon>Liliopsida</taxon>
        <taxon>Poales</taxon>
        <taxon>Poaceae</taxon>
        <taxon>BOP clade</taxon>
        <taxon>Oryzoideae</taxon>
        <taxon>Oryzeae</taxon>
        <taxon>Oryzinae</taxon>
        <taxon>Oryza</taxon>
        <taxon>Oryza sativa</taxon>
    </lineage>
</organism>
<dbReference type="EC" id="2.7.11.1"/>
<dbReference type="EMBL" id="AB125308">
    <property type="protein sequence ID" value="BAD18003.1"/>
    <property type="molecule type" value="mRNA"/>
</dbReference>
<dbReference type="EMBL" id="JF733765">
    <property type="protein sequence ID" value="AEF00936.1"/>
    <property type="molecule type" value="mRNA"/>
</dbReference>
<dbReference type="EMBL" id="JN848808">
    <property type="protein sequence ID" value="AFK74498.1"/>
    <property type="molecule type" value="mRNA"/>
</dbReference>
<dbReference type="EMBL" id="AL606458">
    <property type="protein sequence ID" value="CAE03037.3"/>
    <property type="status" value="ALT_SEQ"/>
    <property type="molecule type" value="Genomic_DNA"/>
</dbReference>
<dbReference type="EMBL" id="AP008210">
    <property type="protein sequence ID" value="BAF14741.1"/>
    <property type="molecule type" value="Genomic_DNA"/>
</dbReference>
<dbReference type="EMBL" id="AP014960">
    <property type="protein sequence ID" value="BAS89270.1"/>
    <property type="molecule type" value="Genomic_DNA"/>
</dbReference>
<dbReference type="EMBL" id="CM000141">
    <property type="protein sequence ID" value="EEE61026.1"/>
    <property type="molecule type" value="Genomic_DNA"/>
</dbReference>
<dbReference type="RefSeq" id="XP_015636932.1">
    <property type="nucleotide sequence ID" value="XM_015781446.1"/>
</dbReference>
<dbReference type="SMR" id="Q7XQP4"/>
<dbReference type="FunCoup" id="Q7XQP4">
    <property type="interactions" value="588"/>
</dbReference>
<dbReference type="STRING" id="39947.Q7XQP4"/>
<dbReference type="PaxDb" id="39947-Q7XQP4"/>
<dbReference type="EnsemblPlants" id="Os04t0432000-02">
    <property type="protein sequence ID" value="Os04t0432000-02"/>
    <property type="gene ID" value="Os04g0432000"/>
</dbReference>
<dbReference type="Gramene" id="Os04t0432000-02">
    <property type="protein sequence ID" value="Os04t0432000-02"/>
    <property type="gene ID" value="Os04g0432000"/>
</dbReference>
<dbReference type="KEGG" id="dosa:Os04g0432000"/>
<dbReference type="eggNOG" id="KOG0583">
    <property type="taxonomic scope" value="Eukaryota"/>
</dbReference>
<dbReference type="HOGENOM" id="CLU_000288_63_0_1"/>
<dbReference type="InParanoid" id="Q7XQP4"/>
<dbReference type="OMA" id="IFADAHM"/>
<dbReference type="OrthoDB" id="193931at2759"/>
<dbReference type="Proteomes" id="UP000000763">
    <property type="component" value="Chromosome 4"/>
</dbReference>
<dbReference type="Proteomes" id="UP000007752">
    <property type="component" value="Chromosome 4"/>
</dbReference>
<dbReference type="Proteomes" id="UP000059680">
    <property type="component" value="Chromosome 4"/>
</dbReference>
<dbReference type="ExpressionAtlas" id="Q7XQP4">
    <property type="expression patterns" value="baseline and differential"/>
</dbReference>
<dbReference type="GO" id="GO:0005737">
    <property type="term" value="C:cytoplasm"/>
    <property type="evidence" value="ECO:0000314"/>
    <property type="project" value="UniProtKB"/>
</dbReference>
<dbReference type="GO" id="GO:0005634">
    <property type="term" value="C:nucleus"/>
    <property type="evidence" value="ECO:0000314"/>
    <property type="project" value="UniProtKB"/>
</dbReference>
<dbReference type="GO" id="GO:0005524">
    <property type="term" value="F:ATP binding"/>
    <property type="evidence" value="ECO:0007669"/>
    <property type="project" value="UniProtKB-KW"/>
</dbReference>
<dbReference type="GO" id="GO:0106310">
    <property type="term" value="F:protein serine kinase activity"/>
    <property type="evidence" value="ECO:0007669"/>
    <property type="project" value="RHEA"/>
</dbReference>
<dbReference type="GO" id="GO:0004674">
    <property type="term" value="F:protein serine/threonine kinase activity"/>
    <property type="evidence" value="ECO:0000318"/>
    <property type="project" value="GO_Central"/>
</dbReference>
<dbReference type="GO" id="GO:0009738">
    <property type="term" value="P:abscisic acid-activated signaling pathway"/>
    <property type="evidence" value="ECO:0007669"/>
    <property type="project" value="UniProtKB-KW"/>
</dbReference>
<dbReference type="GO" id="GO:0042742">
    <property type="term" value="P:defense response to bacterium"/>
    <property type="evidence" value="ECO:0000270"/>
    <property type="project" value="UniProtKB"/>
</dbReference>
<dbReference type="CDD" id="cd14662">
    <property type="entry name" value="STKc_SnRK2"/>
    <property type="match status" value="1"/>
</dbReference>
<dbReference type="FunFam" id="1.10.510.10:FF:000132">
    <property type="entry name" value="Serine/threonine-protein kinase SRK2A"/>
    <property type="match status" value="1"/>
</dbReference>
<dbReference type="FunFam" id="3.30.200.20:FF:000045">
    <property type="entry name" value="Serine/threonine-protein kinase SRK2E"/>
    <property type="match status" value="1"/>
</dbReference>
<dbReference type="Gene3D" id="3.30.200.20">
    <property type="entry name" value="Phosphorylase Kinase, domain 1"/>
    <property type="match status" value="1"/>
</dbReference>
<dbReference type="Gene3D" id="1.10.510.10">
    <property type="entry name" value="Transferase(Phosphotransferase) domain 1"/>
    <property type="match status" value="1"/>
</dbReference>
<dbReference type="InterPro" id="IPR011009">
    <property type="entry name" value="Kinase-like_dom_sf"/>
</dbReference>
<dbReference type="InterPro" id="IPR000719">
    <property type="entry name" value="Prot_kinase_dom"/>
</dbReference>
<dbReference type="InterPro" id="IPR017441">
    <property type="entry name" value="Protein_kinase_ATP_BS"/>
</dbReference>
<dbReference type="InterPro" id="IPR008271">
    <property type="entry name" value="Ser/Thr_kinase_AS"/>
</dbReference>
<dbReference type="PANTHER" id="PTHR24343">
    <property type="entry name" value="SERINE/THREONINE KINASE"/>
    <property type="match status" value="1"/>
</dbReference>
<dbReference type="PANTHER" id="PTHR24343:SF464">
    <property type="entry name" value="SERINE_THREONINE-PROTEIN KINASE SAPK7"/>
    <property type="match status" value="1"/>
</dbReference>
<dbReference type="Pfam" id="PF00069">
    <property type="entry name" value="Pkinase"/>
    <property type="match status" value="1"/>
</dbReference>
<dbReference type="SMART" id="SM00220">
    <property type="entry name" value="S_TKc"/>
    <property type="match status" value="1"/>
</dbReference>
<dbReference type="SUPFAM" id="SSF56112">
    <property type="entry name" value="Protein kinase-like (PK-like)"/>
    <property type="match status" value="1"/>
</dbReference>
<dbReference type="PROSITE" id="PS00107">
    <property type="entry name" value="PROTEIN_KINASE_ATP"/>
    <property type="match status" value="1"/>
</dbReference>
<dbReference type="PROSITE" id="PS50011">
    <property type="entry name" value="PROTEIN_KINASE_DOM"/>
    <property type="match status" value="1"/>
</dbReference>
<dbReference type="PROSITE" id="PS00108">
    <property type="entry name" value="PROTEIN_KINASE_ST"/>
    <property type="match status" value="1"/>
</dbReference>
<feature type="chain" id="PRO_0000086634" description="Serine/threonine-protein kinase SAPK7">
    <location>
        <begin position="1"/>
        <end position="359"/>
    </location>
</feature>
<feature type="domain" description="Protein kinase" evidence="2">
    <location>
        <begin position="4"/>
        <end position="260"/>
    </location>
</feature>
<feature type="region of interest" description="Disordered" evidence="4">
    <location>
        <begin position="299"/>
        <end position="359"/>
    </location>
</feature>
<feature type="compositionally biased region" description="Acidic residues" evidence="4">
    <location>
        <begin position="331"/>
        <end position="343"/>
    </location>
</feature>
<feature type="active site" description="Proton acceptor" evidence="2 3">
    <location>
        <position position="123"/>
    </location>
</feature>
<feature type="binding site" evidence="2">
    <location>
        <begin position="10"/>
        <end position="18"/>
    </location>
    <ligand>
        <name>ATP</name>
        <dbReference type="ChEBI" id="CHEBI:30616"/>
    </ligand>
</feature>
<feature type="binding site" evidence="2">
    <location>
        <position position="33"/>
    </location>
    <ligand>
        <name>ATP</name>
        <dbReference type="ChEBI" id="CHEBI:30616"/>
    </ligand>
</feature>
<proteinExistence type="evidence at transcript level"/>
<name>SAPK7_ORYSJ</name>
<accession>Q7XQP4</accession>
<accession>A0A0U1T2M5</accession>
<accession>Q0JD46</accession>
<accession>Q7XQP3</accession>
<protein>
    <recommendedName>
        <fullName>Serine/threonine-protein kinase SAPK7</fullName>
        <ecNumber>2.7.11.1</ecNumber>
    </recommendedName>
    <alternativeName>
        <fullName>Osmotic stress/abscisic acid-activated protein kinase 7</fullName>
    </alternativeName>
    <alternativeName>
        <fullName evidence="9">RK4 kinase</fullName>
    </alternativeName>
    <alternativeName>
        <fullName evidence="7">stress-activated protein kinase 7</fullName>
        <shortName evidence="7">OsSAPK7</shortName>
    </alternativeName>
</protein>
<gene>
    <name type="primary">SAPK7</name>
    <name type="synonym">RK4</name>
    <name type="ordered locus">Os04g0432000</name>
    <name type="ordered locus">LOC_Os04g35240</name>
    <name type="ORF">OsJ_14855</name>
    <name type="ORF">OSJNBa0084A10.12</name>
</gene>
<evidence type="ECO:0000250" key="1"/>
<evidence type="ECO:0000255" key="2">
    <source>
        <dbReference type="PROSITE-ProRule" id="PRU00159"/>
    </source>
</evidence>
<evidence type="ECO:0000255" key="3">
    <source>
        <dbReference type="PROSITE-ProRule" id="PRU10027"/>
    </source>
</evidence>
<evidence type="ECO:0000256" key="4">
    <source>
        <dbReference type="SAM" id="MobiDB-lite"/>
    </source>
</evidence>
<evidence type="ECO:0000269" key="5">
    <source>
    </source>
</evidence>
<evidence type="ECO:0000269" key="6">
    <source ref="2"/>
</evidence>
<evidence type="ECO:0000303" key="7">
    <source ref="2"/>
</evidence>
<evidence type="ECO:0000305" key="8"/>
<evidence type="ECO:0000312" key="9">
    <source>
        <dbReference type="EMBL" id="AFK74498.1"/>
    </source>
</evidence>